<reference key="1">
    <citation type="submission" date="2006-10" db="EMBL/GenBank/DDBJ databases">
        <authorList>
            <person name="Fleischmann R.D."/>
            <person name="Dodson R.J."/>
            <person name="Haft D.H."/>
            <person name="Merkel J.S."/>
            <person name="Nelson W.C."/>
            <person name="Fraser C.M."/>
        </authorList>
    </citation>
    <scope>NUCLEOTIDE SEQUENCE [LARGE SCALE GENOMIC DNA]</scope>
    <source>
        <strain>ATCC 700084 / mc(2)155</strain>
    </source>
</reference>
<reference key="2">
    <citation type="journal article" date="2007" name="Genome Biol.">
        <title>Interrupted coding sequences in Mycobacterium smegmatis: authentic mutations or sequencing errors?</title>
        <authorList>
            <person name="Deshayes C."/>
            <person name="Perrodou E."/>
            <person name="Gallien S."/>
            <person name="Euphrasie D."/>
            <person name="Schaeffer C."/>
            <person name="Van-Dorsselaer A."/>
            <person name="Poch O."/>
            <person name="Lecompte O."/>
            <person name="Reyrat J.-M."/>
        </authorList>
    </citation>
    <scope>NUCLEOTIDE SEQUENCE [LARGE SCALE GENOMIC DNA]</scope>
    <source>
        <strain>ATCC 700084 / mc(2)155</strain>
    </source>
</reference>
<reference key="3">
    <citation type="journal article" date="2009" name="Genome Res.">
        <title>Ortho-proteogenomics: multiple proteomes investigation through orthology and a new MS-based protocol.</title>
        <authorList>
            <person name="Gallien S."/>
            <person name="Perrodou E."/>
            <person name="Carapito C."/>
            <person name="Deshayes C."/>
            <person name="Reyrat J.-M."/>
            <person name="Van Dorsselaer A."/>
            <person name="Poch O."/>
            <person name="Schaeffer C."/>
            <person name="Lecompte O."/>
        </authorList>
    </citation>
    <scope>NUCLEOTIDE SEQUENCE [LARGE SCALE GENOMIC DNA]</scope>
    <scope>IDENTIFICATION BY MASS SPECTROMETRY [LARGE SCALE ANALYSIS]</scope>
    <source>
        <strain>ATCC 700084 / mc(2)155</strain>
    </source>
</reference>
<reference key="4">
    <citation type="journal article" date="1971" name="J. Biol. Chem.">
        <title>Properties of a trehalose phosphate synthetase from Mycobacterium smegmatis. Activation of the enzyme by polynucleotides and other polyanions.</title>
        <authorList>
            <person name="Lapp D."/>
            <person name="Patterson B.W."/>
            <person name="Elbein A.D."/>
        </authorList>
    </citation>
    <scope>FUNCTION</scope>
    <scope>CATALYTIC ACTIVITY</scope>
    <scope>BIOPHYSICOCHEMICAL PROPERTIES</scope>
    <scope>ACTIVITY REGULATION</scope>
    <scope>SUBSTRATE SPECIFICITY</scope>
</reference>
<reference key="5">
    <citation type="journal article" date="2016" name="PLoS Pathog.">
        <title>Metabolic network for the biosynthesis of intra- and extracellular alpha-glucans required for virulence of Mycobacterium tuberculosis.</title>
        <authorList>
            <person name="Koliwer-Brandl H."/>
            <person name="Syson K."/>
            <person name="van de Weerd R."/>
            <person name="Chandra G."/>
            <person name="Appelmelk B."/>
            <person name="Alber M."/>
            <person name="Ioerger T.R."/>
            <person name="Jacobs W.R. Jr."/>
            <person name="Geurtsen J."/>
            <person name="Bornemann S."/>
            <person name="Kalscheuer R."/>
        </authorList>
    </citation>
    <scope>FUNCTION</scope>
    <scope>DISRUPTION PHENOTYPE</scope>
</reference>
<name>OTSA_MYCS2</name>
<organism>
    <name type="scientific">Mycolicibacterium smegmatis (strain ATCC 700084 / mc(2)155)</name>
    <name type="common">Mycobacterium smegmatis</name>
    <dbReference type="NCBI Taxonomy" id="246196"/>
    <lineage>
        <taxon>Bacteria</taxon>
        <taxon>Bacillati</taxon>
        <taxon>Actinomycetota</taxon>
        <taxon>Actinomycetes</taxon>
        <taxon>Mycobacteriales</taxon>
        <taxon>Mycobacteriaceae</taxon>
        <taxon>Mycolicibacterium</taxon>
    </lineage>
</organism>
<sequence>MSPESGHETISGTSDFVVVANRLPVDLERLPDGTTRWKRSPGGLVTALEPLLRKRRGSWIGWAGVADSDEEPIVQDGLQLHPVRLSADDVAKYYEGFSNATLWPLYHDLIVKPEYHREWWDRYVEVNRRFAEATARAAAEGATVWIQDYQLQLVPKMLRMLRPDVTIGFFLHIPFPPVELFMQMPWRTEIVEGLLGADLVGFHLPGGAQNFLVLSRRLVGANTSRASIGVRSRFGEVQVGFRTVKVGAFPISIDSAELDGKARNRAIRQRARQIRAELGNPRKIMLGVDRLDYTKGIDVRLRALSELLEEKRIKRDDTVLVQLATPSRERVESYIAMREDIERQVGHINGEYGEVGHPIVHYLHRPIPRDELIAFFVAADVMLVTPLRDGMNLVAKEYVACRSDLGGALVLSEFTGAAAELRQAYLVNPHDLEGVKDKIEAAVNQNPEEGKRRMRALRRQVLAHDVDRWARSFLDALAATGETGDSGVTGESTPAPESDSGSF</sequence>
<accession>A0R4M9</accession>
<accession>I7FLH5</accession>
<dbReference type="EC" id="2.4.1.15" evidence="5"/>
<dbReference type="EC" id="2.4.1.347" evidence="5"/>
<dbReference type="EMBL" id="CP000480">
    <property type="protein sequence ID" value="ABK71484.1"/>
    <property type="molecule type" value="Genomic_DNA"/>
</dbReference>
<dbReference type="EMBL" id="CP001663">
    <property type="protein sequence ID" value="AFP42165.1"/>
    <property type="molecule type" value="Genomic_DNA"/>
</dbReference>
<dbReference type="RefSeq" id="WP_011730872.1">
    <property type="nucleotide sequence ID" value="NZ_SIJM01000007.1"/>
</dbReference>
<dbReference type="RefSeq" id="YP_890117.1">
    <property type="nucleotide sequence ID" value="NC_008596.1"/>
</dbReference>
<dbReference type="SMR" id="A0R4M9"/>
<dbReference type="STRING" id="246196.MSMEG_5892"/>
<dbReference type="CAZy" id="GT20">
    <property type="family name" value="Glycosyltransferase Family 20"/>
</dbReference>
<dbReference type="PaxDb" id="246196-MSMEI_5731"/>
<dbReference type="KEGG" id="msb:LJ00_29135"/>
<dbReference type="KEGG" id="msg:MSMEI_5731"/>
<dbReference type="KEGG" id="msm:MSMEG_5892"/>
<dbReference type="PATRIC" id="fig|246196.19.peg.5733"/>
<dbReference type="eggNOG" id="COG0380">
    <property type="taxonomic scope" value="Bacteria"/>
</dbReference>
<dbReference type="OrthoDB" id="9761633at2"/>
<dbReference type="UniPathway" id="UPA00299"/>
<dbReference type="Proteomes" id="UP000000757">
    <property type="component" value="Chromosome"/>
</dbReference>
<dbReference type="Proteomes" id="UP000006158">
    <property type="component" value="Chromosome"/>
</dbReference>
<dbReference type="GO" id="GO:0005829">
    <property type="term" value="C:cytosol"/>
    <property type="evidence" value="ECO:0007669"/>
    <property type="project" value="TreeGrafter"/>
</dbReference>
<dbReference type="GO" id="GO:0047260">
    <property type="term" value="F:alpha,alpha-trehalose-phosphate synthase (GDP-forming) activity"/>
    <property type="evidence" value="ECO:0007669"/>
    <property type="project" value="RHEA"/>
</dbReference>
<dbReference type="GO" id="GO:0003825">
    <property type="term" value="F:alpha,alpha-trehalose-phosphate synthase (UDP-forming) activity"/>
    <property type="evidence" value="ECO:0007669"/>
    <property type="project" value="UniProtKB-EC"/>
</dbReference>
<dbReference type="GO" id="GO:0004805">
    <property type="term" value="F:trehalose-phosphatase activity"/>
    <property type="evidence" value="ECO:0007669"/>
    <property type="project" value="TreeGrafter"/>
</dbReference>
<dbReference type="GO" id="GO:0005992">
    <property type="term" value="P:trehalose biosynthetic process"/>
    <property type="evidence" value="ECO:0007669"/>
    <property type="project" value="UniProtKB-UniPathway"/>
</dbReference>
<dbReference type="CDD" id="cd03788">
    <property type="entry name" value="GT20_TPS"/>
    <property type="match status" value="1"/>
</dbReference>
<dbReference type="Gene3D" id="3.40.50.2000">
    <property type="entry name" value="Glycogen Phosphorylase B"/>
    <property type="match status" value="2"/>
</dbReference>
<dbReference type="InterPro" id="IPR001830">
    <property type="entry name" value="Glyco_trans_20"/>
</dbReference>
<dbReference type="PANTHER" id="PTHR10788:SF106">
    <property type="entry name" value="BCDNA.GH08860"/>
    <property type="match status" value="1"/>
</dbReference>
<dbReference type="PANTHER" id="PTHR10788">
    <property type="entry name" value="TREHALOSE-6-PHOSPHATE SYNTHASE"/>
    <property type="match status" value="1"/>
</dbReference>
<dbReference type="Pfam" id="PF00982">
    <property type="entry name" value="Glyco_transf_20"/>
    <property type="match status" value="1"/>
</dbReference>
<dbReference type="SUPFAM" id="SSF53756">
    <property type="entry name" value="UDP-Glycosyltransferase/glycogen phosphorylase"/>
    <property type="match status" value="1"/>
</dbReference>
<keyword id="KW-0328">Glycosyltransferase</keyword>
<keyword id="KW-1185">Reference proteome</keyword>
<keyword id="KW-0808">Transferase</keyword>
<gene>
    <name evidence="6" type="primary">otsA</name>
    <name type="ordered locus">MSMEG_5892</name>
    <name type="ordered locus">MSMEI_5731</name>
</gene>
<feature type="chain" id="PRO_0000348910" description="Trehalose-6-phosphate synthase">
    <location>
        <begin position="1"/>
        <end position="503"/>
    </location>
</feature>
<feature type="region of interest" description="Disordered" evidence="3">
    <location>
        <begin position="481"/>
        <end position="503"/>
    </location>
</feature>
<feature type="binding site" evidence="1">
    <location>
        <position position="22"/>
    </location>
    <ligand>
        <name>D-glucose 6-phosphate</name>
        <dbReference type="ChEBI" id="CHEBI:61548"/>
    </ligand>
</feature>
<feature type="binding site" evidence="1">
    <location>
        <begin position="42"/>
        <end position="43"/>
    </location>
    <ligand>
        <name>UDP-alpha-D-glucose</name>
        <dbReference type="ChEBI" id="CHEBI:58885"/>
    </ligand>
</feature>
<feature type="binding site" evidence="1">
    <location>
        <position position="94"/>
    </location>
    <ligand>
        <name>D-glucose 6-phosphate</name>
        <dbReference type="ChEBI" id="CHEBI:61548"/>
    </ligand>
</feature>
<feature type="binding site" evidence="1">
    <location>
        <position position="148"/>
    </location>
    <ligand>
        <name>D-glucose 6-phosphate</name>
        <dbReference type="ChEBI" id="CHEBI:61548"/>
    </ligand>
</feature>
<feature type="binding site" evidence="1">
    <location>
        <position position="290"/>
    </location>
    <ligand>
        <name>UDP-alpha-D-glucose</name>
        <dbReference type="ChEBI" id="CHEBI:58885"/>
    </ligand>
</feature>
<feature type="binding site" evidence="1">
    <location>
        <position position="295"/>
    </location>
    <ligand>
        <name>UDP-alpha-D-glucose</name>
        <dbReference type="ChEBI" id="CHEBI:58885"/>
    </ligand>
</feature>
<feature type="binding site" evidence="1">
    <location>
        <position position="328"/>
    </location>
    <ligand>
        <name>D-glucose 6-phosphate</name>
        <dbReference type="ChEBI" id="CHEBI:61548"/>
    </ligand>
</feature>
<feature type="binding site" evidence="1">
    <location>
        <begin position="393"/>
        <end position="397"/>
    </location>
    <ligand>
        <name>UDP-alpha-D-glucose</name>
        <dbReference type="ChEBI" id="CHEBI:58885"/>
    </ligand>
</feature>
<feature type="site" description="Involved in alpha anomer selectivity" evidence="1">
    <location>
        <position position="103"/>
    </location>
</feature>
<feature type="site" description="Involved in alpha anomer selectivity" evidence="1">
    <location>
        <position position="173"/>
    </location>
</feature>
<proteinExistence type="evidence at protein level"/>
<protein>
    <recommendedName>
        <fullName evidence="6">Trehalose-6-phosphate synthase</fullName>
        <shortName evidence="6">TPS</shortName>
        <ecNumber evidence="5">2.4.1.15</ecNumber>
        <ecNumber evidence="5">2.4.1.347</ecNumber>
    </recommendedName>
    <alternativeName>
        <fullName evidence="7">Alpha,alpha-trehalose-phosphate synthase [UDP-forming]</fullName>
    </alternativeName>
    <alternativeName>
        <fullName evidence="1">Osmoregulatory trehalose synthesis protein A</fullName>
        <shortName evidence="1">OtsA</shortName>
    </alternativeName>
</protein>
<comment type="function">
    <text evidence="4 5">Involved in the production of glycogen and alpha-glucan via the TreS-Pep2 branch involved in the biosynthesis of maltose-1-phosphate (M1P), and probably in the osmoprotection via the biosynthesis of trehalose (PubMed:27513637, Ref.4). Catalyzes the transfer of glucose from UDP-glucose (UDP-Glc) to glucose-6-phosphate (Glc-6-P) to form trehalose-6-phosphate (Ref.4). ADP-Glc, CDP-Glc, GDP-Glc and TDP-Glc are also glucosyl donors, however, when the pyrimidine sugar nucleotides (CDP-Glc, TDP-Glc and UDP-Glc) are used as substrates, there is an absolute requirement for a high molecular weight polyanion for activity (Ref.4).</text>
</comment>
<comment type="catalytic activity">
    <reaction evidence="5">
        <text>ADP-alpha-D-glucose + D-glucose 6-phosphate = alpha,alpha-trehalose 6-phosphate + ADP + H(+)</text>
        <dbReference type="Rhea" id="RHEA:53880"/>
        <dbReference type="ChEBI" id="CHEBI:15378"/>
        <dbReference type="ChEBI" id="CHEBI:57498"/>
        <dbReference type="ChEBI" id="CHEBI:58429"/>
        <dbReference type="ChEBI" id="CHEBI:61548"/>
        <dbReference type="ChEBI" id="CHEBI:456216"/>
        <dbReference type="EC" id="2.4.1.347"/>
    </reaction>
</comment>
<comment type="catalytic activity">
    <reaction evidence="5">
        <text>CDP-alpha-D-glucose + D-glucose 6-phosphate = alpha,alpha-trehalose 6-phosphate + CDP + H(+)</text>
        <dbReference type="Rhea" id="RHEA:53884"/>
        <dbReference type="ChEBI" id="CHEBI:15378"/>
        <dbReference type="ChEBI" id="CHEBI:58069"/>
        <dbReference type="ChEBI" id="CHEBI:58429"/>
        <dbReference type="ChEBI" id="CHEBI:61548"/>
        <dbReference type="ChEBI" id="CHEBI:137927"/>
    </reaction>
</comment>
<comment type="catalytic activity">
    <reaction evidence="5">
        <text>GDP-alpha-D-glucose + D-glucose 6-phosphate = alpha,alpha-trehalose 6-phosphate + GDP + H(+)</text>
        <dbReference type="Rhea" id="RHEA:14605"/>
        <dbReference type="ChEBI" id="CHEBI:15378"/>
        <dbReference type="ChEBI" id="CHEBI:58189"/>
        <dbReference type="ChEBI" id="CHEBI:58429"/>
        <dbReference type="ChEBI" id="CHEBI:61548"/>
        <dbReference type="ChEBI" id="CHEBI:62230"/>
    </reaction>
</comment>
<comment type="catalytic activity">
    <reaction evidence="5">
        <text>TDP-alpha-D-glucose + D-glucose 6-phosphate = 5-methyl-UDP + alpha,alpha-trehalose 6-phosphate + H(+)</text>
        <dbReference type="Rhea" id="RHEA:53888"/>
        <dbReference type="ChEBI" id="CHEBI:15378"/>
        <dbReference type="ChEBI" id="CHEBI:58429"/>
        <dbReference type="ChEBI" id="CHEBI:61417"/>
        <dbReference type="ChEBI" id="CHEBI:61548"/>
        <dbReference type="ChEBI" id="CHEBI:137931"/>
    </reaction>
</comment>
<comment type="catalytic activity">
    <reaction evidence="5">
        <text>D-glucose 6-phosphate + UDP-alpha-D-glucose = alpha,alpha-trehalose 6-phosphate + UDP + H(+)</text>
        <dbReference type="Rhea" id="RHEA:18889"/>
        <dbReference type="ChEBI" id="CHEBI:15378"/>
        <dbReference type="ChEBI" id="CHEBI:58223"/>
        <dbReference type="ChEBI" id="CHEBI:58429"/>
        <dbReference type="ChEBI" id="CHEBI:58885"/>
        <dbReference type="ChEBI" id="CHEBI:61548"/>
        <dbReference type="EC" id="2.4.1.15"/>
    </reaction>
</comment>
<comment type="activity regulation">
    <text evidence="5">Stimulated by the polynucleotide FII (physiological activator), and by chondroitin sulfate (CS) and heparin. Activation by the polyanion is inhibited by high salt concentration as well as by high concentrations of mononucleoside phosphates.</text>
</comment>
<comment type="biophysicochemical properties">
    <kinetics>
        <KM evidence="5">40 uM for UDP-Glc (in the presence of polyanion)</KM>
        <KM evidence="5">1 mM for Glc-6-P (with UDP-Glc in the presence of polyanion)</KM>
        <KM evidence="5">2 mM for Glc-6-P (with GDP-Glc in the presence of polyanion)</KM>
    </kinetics>
    <phDependence>
        <text evidence="5">Optimum pH is 7.</text>
    </phDependence>
    <temperatureDependence>
        <text evidence="5">About 60% of the activity is lost in the absence of FII after 10 minutes at 40 degrees Celsius, but only 35% in the presence of FII.</text>
    </temperatureDependence>
</comment>
<comment type="pathway">
    <text evidence="7">Glycan biosynthesis; trehalose biosynthesis.</text>
</comment>
<comment type="subunit">
    <text evidence="2">Homotetramer.</text>
</comment>
<comment type="disruption phenotype">
    <text evidence="4">Cells lacking this gene do not accumulate ADP-glucose, however combined inactivation of both glgM and ostA accumulates ADP-glucose.</text>
</comment>
<comment type="similarity">
    <text evidence="7">Belongs to the glycosyltransferase 20 family.</text>
</comment>
<evidence type="ECO:0000250" key="1">
    <source>
        <dbReference type="UniProtKB" id="P31677"/>
    </source>
</evidence>
<evidence type="ECO:0000250" key="2">
    <source>
        <dbReference type="UniProtKB" id="P9WN11"/>
    </source>
</evidence>
<evidence type="ECO:0000256" key="3">
    <source>
        <dbReference type="SAM" id="MobiDB-lite"/>
    </source>
</evidence>
<evidence type="ECO:0000269" key="4">
    <source>
    </source>
</evidence>
<evidence type="ECO:0000269" key="5">
    <source ref="4"/>
</evidence>
<evidence type="ECO:0000303" key="6">
    <source ref="4"/>
</evidence>
<evidence type="ECO:0000305" key="7"/>